<reference key="1">
    <citation type="journal article" date="2016" name="Stand. Genomic Sci.">
        <title>Complete genome sequence of Methanospirillum hungatei type strain JF1.</title>
        <authorList>
            <person name="Gunsalus R.P."/>
            <person name="Cook L.E."/>
            <person name="Crable B."/>
            <person name="Rohlin L."/>
            <person name="McDonald E."/>
            <person name="Mouttaki H."/>
            <person name="Sieber J.R."/>
            <person name="Poweleit N."/>
            <person name="Zhou H."/>
            <person name="Lapidus A.L."/>
            <person name="Daligault H.E."/>
            <person name="Land M."/>
            <person name="Gilna P."/>
            <person name="Ivanova N."/>
            <person name="Kyrpides N."/>
            <person name="Culley D.E."/>
            <person name="McInerney M.J."/>
        </authorList>
    </citation>
    <scope>NUCLEOTIDE SEQUENCE [LARGE SCALE GENOMIC DNA]</scope>
    <source>
        <strain>ATCC 27890 / DSM 864 / NBRC 100397 / JF-1</strain>
    </source>
</reference>
<feature type="chain" id="PRO_5000109094" description="UPF0182 protein Mhun_1303">
    <location>
        <begin position="1"/>
        <end position="899"/>
    </location>
</feature>
<feature type="transmembrane region" description="Helical" evidence="1">
    <location>
        <begin position="6"/>
        <end position="26"/>
    </location>
</feature>
<feature type="transmembrane region" description="Helical" evidence="1">
    <location>
        <begin position="39"/>
        <end position="59"/>
    </location>
</feature>
<feature type="transmembrane region" description="Helical" evidence="1">
    <location>
        <begin position="93"/>
        <end position="113"/>
    </location>
</feature>
<feature type="transmembrane region" description="Helical" evidence="1">
    <location>
        <begin position="136"/>
        <end position="156"/>
    </location>
</feature>
<feature type="transmembrane region" description="Helical" evidence="1">
    <location>
        <begin position="196"/>
        <end position="216"/>
    </location>
</feature>
<feature type="transmembrane region" description="Helical" evidence="1">
    <location>
        <begin position="240"/>
        <end position="260"/>
    </location>
</feature>
<feature type="transmembrane region" description="Helical" evidence="1">
    <location>
        <begin position="271"/>
        <end position="291"/>
    </location>
</feature>
<protein>
    <recommendedName>
        <fullName evidence="1">UPF0182 protein Mhun_1303</fullName>
    </recommendedName>
</protein>
<comment type="subcellular location">
    <subcellularLocation>
        <location evidence="1">Cell membrane</location>
        <topology evidence="1">Multi-pass membrane protein</topology>
    </subcellularLocation>
</comment>
<comment type="similarity">
    <text evidence="1">Belongs to the UPF0182 family.</text>
</comment>
<sequence>MRLRKLLIFIPAAVILLFFLLTDLLSDLFWYASVGYSPVFLTILITSAALFVIGTLLFFAFSYGNVILAARTGAGAFGVEKEIQYLGGIACAVAAGITGLSLSSSWEIILAFLDQTPFHISDPVFGLDISFYIFSLPFYTILIQYLLALFVFTLIISSVMYAAHRAGVRIDEYGVFQYIPGPFPFGLSWKDTVGRFLPQVNCLLFLIFTTLAAFLWLTRYSTLYTSKGTVIGAGYTDVTITIPALTILTVIAFLIGLLFLLNEKIKRSEMIAYGIGGFFIIAILSAGAGFLVQTLIVEPNEFNLERTYLGYNINSTLDGYNLANINARDFPVLYNLTETDIRNNNATISNIRLWDWRPMKTTLEQLQLFRTYYTFNDVDVDRYWLDGNYKQVHISAREMNSYNLPQQAQTWVNRHLVFTHGYGAVMSPVDRITTNGLPEFFVKDIPPSSPFPSLSLDHPQIYYGEGDIPYCITNTRTEEFDYPSGDENIYSLYDGNAGVELSLLPRLVYAIQLGSVELLVSGSLTPDSKLHLYRNILERTSKIAPFLTYDSDPYVVMSDGKLSWIIDAYTTSDRYPYSEPVRTGELSAKSMNYVRNSVKVIVDAYTGDIRYYIVDPDDPVIQTYAKMFPGLFRPVDDIPDDLRSHLRYPHGLFNIQAEIYGIYHMTDPRVFYNREDAWVIPDEIYRKTQQRFEPYYVIMKLPGEEREEFILMLPFTPRNKQNLIGWMAVRCDPDRYGEMIVYQFSKQELTYGPMQIEARIDQDTDISQSITLWSQAGSSVVRGNTLIIPVEQSLLYVEPLYLEATQKGTLPQLQRVIVSYGDKLTMQPTLNEALQVIFGGRQARQDITKRVEQPGDDQSSSILGQISGLYKQAQQALSSGSLGEYQQFVDRIGTLVSGY</sequence>
<keyword id="KW-1003">Cell membrane</keyword>
<keyword id="KW-0472">Membrane</keyword>
<keyword id="KW-1185">Reference proteome</keyword>
<keyword id="KW-0812">Transmembrane</keyword>
<keyword id="KW-1133">Transmembrane helix</keyword>
<organism>
    <name type="scientific">Methanospirillum hungatei JF-1 (strain ATCC 27890 / DSM 864 / NBRC 100397 / JF-1)</name>
    <dbReference type="NCBI Taxonomy" id="323259"/>
    <lineage>
        <taxon>Archaea</taxon>
        <taxon>Methanobacteriati</taxon>
        <taxon>Methanobacteriota</taxon>
        <taxon>Stenosarchaea group</taxon>
        <taxon>Methanomicrobia</taxon>
        <taxon>Methanomicrobiales</taxon>
        <taxon>Methanospirillaceae</taxon>
        <taxon>Methanospirillum</taxon>
    </lineage>
</organism>
<dbReference type="EMBL" id="CP000254">
    <property type="protein sequence ID" value="ABD41044.1"/>
    <property type="molecule type" value="Genomic_DNA"/>
</dbReference>
<dbReference type="RefSeq" id="WP_011448321.1">
    <property type="nucleotide sequence ID" value="NC_007796.1"/>
</dbReference>
<dbReference type="SMR" id="Q2FNZ0"/>
<dbReference type="STRING" id="323259.Mhun_1303"/>
<dbReference type="EnsemblBacteria" id="ABD41044">
    <property type="protein sequence ID" value="ABD41044"/>
    <property type="gene ID" value="Mhun_1303"/>
</dbReference>
<dbReference type="GeneID" id="3922588"/>
<dbReference type="KEGG" id="mhu:Mhun_1303"/>
<dbReference type="eggNOG" id="arCOG06128">
    <property type="taxonomic scope" value="Archaea"/>
</dbReference>
<dbReference type="HOGENOM" id="CLU_007733_0_0_2"/>
<dbReference type="InParanoid" id="Q2FNZ0"/>
<dbReference type="OrthoDB" id="8749at2157"/>
<dbReference type="Proteomes" id="UP000001941">
    <property type="component" value="Chromosome"/>
</dbReference>
<dbReference type="GO" id="GO:0005576">
    <property type="term" value="C:extracellular region"/>
    <property type="evidence" value="ECO:0007669"/>
    <property type="project" value="TreeGrafter"/>
</dbReference>
<dbReference type="GO" id="GO:0005886">
    <property type="term" value="C:plasma membrane"/>
    <property type="evidence" value="ECO:0007669"/>
    <property type="project" value="UniProtKB-SubCell"/>
</dbReference>
<dbReference type="HAMAP" id="MF_01600">
    <property type="entry name" value="UPF0182"/>
    <property type="match status" value="1"/>
</dbReference>
<dbReference type="InterPro" id="IPR005372">
    <property type="entry name" value="UPF0182"/>
</dbReference>
<dbReference type="PANTHER" id="PTHR39344">
    <property type="entry name" value="UPF0182 PROTEIN SLL1060"/>
    <property type="match status" value="1"/>
</dbReference>
<dbReference type="PANTHER" id="PTHR39344:SF1">
    <property type="entry name" value="UPF0182 PROTEIN SLL1060"/>
    <property type="match status" value="1"/>
</dbReference>
<dbReference type="Pfam" id="PF03699">
    <property type="entry name" value="UPF0182"/>
    <property type="match status" value="1"/>
</dbReference>
<accession>Q2FNZ0</accession>
<evidence type="ECO:0000255" key="1">
    <source>
        <dbReference type="HAMAP-Rule" id="MF_01600"/>
    </source>
</evidence>
<gene>
    <name type="ordered locus">Mhun_1303</name>
</gene>
<proteinExistence type="inferred from homology"/>
<name>Y1303_METHJ</name>